<evidence type="ECO:0000250" key="1"/>
<evidence type="ECO:0000305" key="2"/>
<protein>
    <recommendedName>
        <fullName evidence="2">Small ribosomal subunit protein uS3c</fullName>
    </recommendedName>
    <alternativeName>
        <fullName>30S ribosomal protein S3, chloroplastic</fullName>
    </alternativeName>
</protein>
<accession>A4QK56</accession>
<organism>
    <name type="scientific">Arabis hirsuta</name>
    <name type="common">Hairy rock-cress</name>
    <name type="synonym">Turritis hirsuta</name>
    <dbReference type="NCBI Taxonomy" id="78191"/>
    <lineage>
        <taxon>Eukaryota</taxon>
        <taxon>Viridiplantae</taxon>
        <taxon>Streptophyta</taxon>
        <taxon>Embryophyta</taxon>
        <taxon>Tracheophyta</taxon>
        <taxon>Spermatophyta</taxon>
        <taxon>Magnoliopsida</taxon>
        <taxon>eudicotyledons</taxon>
        <taxon>Gunneridae</taxon>
        <taxon>Pentapetalae</taxon>
        <taxon>rosids</taxon>
        <taxon>malvids</taxon>
        <taxon>Brassicales</taxon>
        <taxon>Brassicaceae</taxon>
        <taxon>Arabideae</taxon>
        <taxon>Arabis</taxon>
    </lineage>
</organism>
<dbReference type="EMBL" id="AP009369">
    <property type="protein sequence ID" value="BAF50061.1"/>
    <property type="molecule type" value="Genomic_DNA"/>
</dbReference>
<dbReference type="RefSeq" id="YP_001123237.1">
    <property type="nucleotide sequence ID" value="NC_009268.1"/>
</dbReference>
<dbReference type="SMR" id="A4QK56"/>
<dbReference type="GeneID" id="4962585"/>
<dbReference type="GO" id="GO:0009507">
    <property type="term" value="C:chloroplast"/>
    <property type="evidence" value="ECO:0007669"/>
    <property type="project" value="UniProtKB-SubCell"/>
</dbReference>
<dbReference type="GO" id="GO:0022627">
    <property type="term" value="C:cytosolic small ribosomal subunit"/>
    <property type="evidence" value="ECO:0007669"/>
    <property type="project" value="TreeGrafter"/>
</dbReference>
<dbReference type="GO" id="GO:0019843">
    <property type="term" value="F:rRNA binding"/>
    <property type="evidence" value="ECO:0007669"/>
    <property type="project" value="UniProtKB-UniRule"/>
</dbReference>
<dbReference type="GO" id="GO:0003735">
    <property type="term" value="F:structural constituent of ribosome"/>
    <property type="evidence" value="ECO:0007669"/>
    <property type="project" value="InterPro"/>
</dbReference>
<dbReference type="GO" id="GO:0006412">
    <property type="term" value="P:translation"/>
    <property type="evidence" value="ECO:0007669"/>
    <property type="project" value="UniProtKB-UniRule"/>
</dbReference>
<dbReference type="CDD" id="cd02412">
    <property type="entry name" value="KH-II_30S_S3"/>
    <property type="match status" value="1"/>
</dbReference>
<dbReference type="FunFam" id="3.30.1140.32:FF:000003">
    <property type="entry name" value="30S ribosomal protein S3, chloroplastic"/>
    <property type="match status" value="1"/>
</dbReference>
<dbReference type="FunFam" id="3.30.300.20:FF:000008">
    <property type="entry name" value="30S ribosomal protein S3, chloroplastic"/>
    <property type="match status" value="1"/>
</dbReference>
<dbReference type="Gene3D" id="3.30.300.20">
    <property type="match status" value="1"/>
</dbReference>
<dbReference type="Gene3D" id="3.30.1140.32">
    <property type="entry name" value="Ribosomal protein S3, C-terminal domain"/>
    <property type="match status" value="1"/>
</dbReference>
<dbReference type="HAMAP" id="MF_01309_B">
    <property type="entry name" value="Ribosomal_uS3_B"/>
    <property type="match status" value="1"/>
</dbReference>
<dbReference type="InterPro" id="IPR015946">
    <property type="entry name" value="KH_dom-like_a/b"/>
</dbReference>
<dbReference type="InterPro" id="IPR004044">
    <property type="entry name" value="KH_dom_type_2"/>
</dbReference>
<dbReference type="InterPro" id="IPR009019">
    <property type="entry name" value="KH_sf_prok-type"/>
</dbReference>
<dbReference type="InterPro" id="IPR036419">
    <property type="entry name" value="Ribosomal_S3_C_sf"/>
</dbReference>
<dbReference type="InterPro" id="IPR005704">
    <property type="entry name" value="Ribosomal_uS3_bac-typ"/>
</dbReference>
<dbReference type="InterPro" id="IPR001351">
    <property type="entry name" value="Ribosomal_uS3_C"/>
</dbReference>
<dbReference type="InterPro" id="IPR018280">
    <property type="entry name" value="Ribosomal_uS3_CS"/>
</dbReference>
<dbReference type="NCBIfam" id="TIGR01009">
    <property type="entry name" value="rpsC_bact"/>
    <property type="match status" value="1"/>
</dbReference>
<dbReference type="PANTHER" id="PTHR11760">
    <property type="entry name" value="30S/40S RIBOSOMAL PROTEIN S3"/>
    <property type="match status" value="1"/>
</dbReference>
<dbReference type="PANTHER" id="PTHR11760:SF19">
    <property type="entry name" value="SMALL RIBOSOMAL SUBUNIT PROTEIN US3C"/>
    <property type="match status" value="1"/>
</dbReference>
<dbReference type="Pfam" id="PF00189">
    <property type="entry name" value="Ribosomal_S3_C"/>
    <property type="match status" value="1"/>
</dbReference>
<dbReference type="SUPFAM" id="SSF54814">
    <property type="entry name" value="Prokaryotic type KH domain (KH-domain type II)"/>
    <property type="match status" value="1"/>
</dbReference>
<dbReference type="SUPFAM" id="SSF54821">
    <property type="entry name" value="Ribosomal protein S3 C-terminal domain"/>
    <property type="match status" value="1"/>
</dbReference>
<dbReference type="PROSITE" id="PS50823">
    <property type="entry name" value="KH_TYPE_2"/>
    <property type="match status" value="1"/>
</dbReference>
<dbReference type="PROSITE" id="PS00548">
    <property type="entry name" value="RIBOSOMAL_S3"/>
    <property type="match status" value="1"/>
</dbReference>
<keyword id="KW-0150">Chloroplast</keyword>
<keyword id="KW-0934">Plastid</keyword>
<keyword id="KW-0687">Ribonucleoprotein</keyword>
<keyword id="KW-0689">Ribosomal protein</keyword>
<keyword id="KW-0694">RNA-binding</keyword>
<keyword id="KW-0699">rRNA-binding</keyword>
<gene>
    <name type="primary">rps3</name>
</gene>
<sequence>MGQKINPLGFRLGTTQSHHSVWFAQPKKYSEGLEEDKKIRDCIKNYVQKNIRISSGMEGIARIEIQKRIDLIQIIIYMGFPKLLIEDKPRRVEELQMNVQKELNCVNRKLNIAITRISNPYGQPNILAEFIAGQLKNRVSFRKAMKKAIELTEQANTKGIQVQIAGRIDGKEIARVEWIREGRVPLQTIDAKIDYCSYTVRTIYGVLGIKIWIFVDEE</sequence>
<geneLocation type="chloroplast"/>
<comment type="subunit">
    <text evidence="1">Part of the 30S ribosomal subunit.</text>
</comment>
<comment type="subcellular location">
    <subcellularLocation>
        <location>Plastid</location>
        <location>Chloroplast</location>
    </subcellularLocation>
</comment>
<comment type="similarity">
    <text evidence="2">Belongs to the universal ribosomal protein uS3 family.</text>
</comment>
<name>RR3_ARAHI</name>
<proteinExistence type="inferred from homology"/>
<reference key="1">
    <citation type="submission" date="2007-03" db="EMBL/GenBank/DDBJ databases">
        <title>Sequencing analysis of Arabis hirsuta chloroplast DNA.</title>
        <authorList>
            <person name="Hosouchi T."/>
            <person name="Tsuruoka H."/>
            <person name="Kotani H."/>
        </authorList>
    </citation>
    <scope>NUCLEOTIDE SEQUENCE [LARGE SCALE GENOMIC DNA]</scope>
</reference>
<feature type="chain" id="PRO_0000293937" description="Small ribosomal subunit protein uS3c">
    <location>
        <begin position="1"/>
        <end position="218"/>
    </location>
</feature>
<feature type="domain" description="KH type-2">
    <location>
        <begin position="47"/>
        <end position="118"/>
    </location>
</feature>